<protein>
    <recommendedName>
        <fullName>Peptidyl-prolyl cis-trans isomerase F, mitochondrial</fullName>
        <shortName>PPIase F</shortName>
        <ecNumber evidence="1">5.2.1.8</ecNumber>
    </recommendedName>
    <alternativeName>
        <fullName>Cyclophilin D</fullName>
        <shortName>CyP-D</shortName>
        <shortName>CypD</shortName>
    </alternativeName>
    <alternativeName>
        <fullName>Cyclophilin F</fullName>
    </alternativeName>
    <alternativeName>
        <fullName>Rotamase F</fullName>
    </alternativeName>
</protein>
<accession>P29117</accession>
<name>PPIF_RAT</name>
<reference key="1">
    <citation type="submission" date="1996-09" db="EMBL/GenBank/DDBJ databases">
        <authorList>
            <person name="Price N.T."/>
            <person name="Woodfield K.Y."/>
            <person name="Halestrap A.P."/>
        </authorList>
    </citation>
    <scope>NUCLEOTIDE SEQUENCE [MRNA]</scope>
    <source>
        <strain>Wistar</strain>
        <tissue>Skeletal muscle</tissue>
    </source>
</reference>
<reference key="2">
    <citation type="journal article" date="2004" name="Genome Res.">
        <title>The status, quality, and expansion of the NIH full-length cDNA project: the Mammalian Gene Collection (MGC).</title>
        <authorList>
            <consortium name="The MGC Project Team"/>
        </authorList>
    </citation>
    <scope>NUCLEOTIDE SEQUENCE [LARGE SCALE MRNA]</scope>
    <source>
        <tissue>Heart</tissue>
    </source>
</reference>
<reference key="3">
    <citation type="journal article" date="1992" name="Biochem. J.">
        <title>Purification and N-terminal sequencing of peptidyl-prolyl cis-trans-isomerase from rat liver mitochondrial matrix reveals the existence of a distinct mitochondrial cyclophilin.</title>
        <authorList>
            <person name="Connern C.P."/>
            <person name="Halestrap A.P."/>
        </authorList>
    </citation>
    <scope>PROTEIN SEQUENCE OF 30-58</scope>
    <source>
        <tissue>Liver</tissue>
    </source>
</reference>
<reference key="4">
    <citation type="journal article" date="1996" name="J. Biol. Chem.">
        <title>Interactions of cyclophilin with the mitochondrial inner membrane and regulation of the permeability transition pore, and cyclosporin A-sensitive channel.</title>
        <authorList>
            <person name="Nicolli A."/>
            <person name="Basso E."/>
            <person name="Petronilli V."/>
            <person name="Wenger R.M."/>
            <person name="Bernardi P."/>
        </authorList>
    </citation>
    <scope>FUNCTION</scope>
    <scope>SUBCELLULAR LOCATION</scope>
</reference>
<reference key="5">
    <citation type="journal article" date="1997" name="Mol. Cell. Biochem.">
        <title>Two modes of activation of the permeability transition pore: the role of mitochondrial cyclophilin.</title>
        <authorList>
            <person name="Scorrano L."/>
            <person name="Nicolli A."/>
            <person name="Basso E."/>
            <person name="Petronilli V."/>
            <person name="Bernardi P."/>
        </authorList>
    </citation>
    <scope>FUNCTION</scope>
</reference>
<reference key="6">
    <citation type="journal article" date="1998" name="Biochem. J.">
        <title>Direct demonstration of a specific interaction between cyclophilin-D and the adenine nucleotide translocase confirms their role in the mitochondrial permeability transition.</title>
        <authorList>
            <person name="Woodfield K."/>
            <person name="Ruck A."/>
            <person name="Brdiczka D."/>
            <person name="Halestrap A.P."/>
        </authorList>
    </citation>
    <scope>FUNCTION</scope>
</reference>
<reference key="7">
    <citation type="journal article" date="1998" name="Eur. J. Biochem.">
        <title>Cyclophilin-D binds strongly to complexes of the voltage-dependent anion channel and the adenine nucleotide translocase to form the permeability transition pore.</title>
        <authorList>
            <person name="Crompton M."/>
            <person name="Virji S."/>
            <person name="Ward J.M."/>
        </authorList>
    </citation>
    <scope>INTERACTION WITH VDAC1</scope>
</reference>
<reference key="8">
    <citation type="journal article" date="2008" name="J. Biol. Chem.">
        <title>The mitochondrial phosphate carrier interacts with cyclophilin D and may play a key role in the permeability transition.</title>
        <authorList>
            <person name="Leung A.W."/>
            <person name="Varanyuwatana P."/>
            <person name="Halestrap A.P."/>
        </authorList>
    </citation>
    <scope>INTERACTION WITH SLC25A3</scope>
</reference>
<reference key="9">
    <citation type="journal article" date="2009" name="J. Biol. Chem.">
        <title>Cyclophilin D interacts with Bcl2 and exerts an anti-apoptotic effect.</title>
        <authorList>
            <person name="Eliseev R.A."/>
            <person name="Malecki J."/>
            <person name="Lester T."/>
            <person name="Zhang Y."/>
            <person name="Humphrey J."/>
            <person name="Gunter T.E."/>
        </authorList>
    </citation>
    <scope>SUBCELLULAR LOCATION</scope>
    <scope>FUNCTION</scope>
    <scope>INTERACTION WITH BCL2</scope>
</reference>
<sequence length="206" mass="21810">MLALRCGPRLLGLLSGPRSAPLLLSTTRTCSDGGARGANSSSQNPLVYLDVGADGQPLGRVVLELKADVVPKTAENFRALCTGEKGFGYKGSTFHRVIPAFMCQAGDFTNHNGTGGKSIYGSRFPDENFTLKHVGPGVLSMANAGPNTNGSQFFICTIKTDWLDGKHVVFGHVKEGMDVVKKIESFGSKSGKTSKKIVITDCGQLS</sequence>
<keyword id="KW-0002">3D-structure</keyword>
<keyword id="KW-0007">Acetylation</keyword>
<keyword id="KW-0053">Apoptosis</keyword>
<keyword id="KW-0903">Direct protein sequencing</keyword>
<keyword id="KW-0413">Isomerase</keyword>
<keyword id="KW-0496">Mitochondrion</keyword>
<keyword id="KW-1210">Necrosis</keyword>
<keyword id="KW-1185">Reference proteome</keyword>
<keyword id="KW-0697">Rotamase</keyword>
<keyword id="KW-0702">S-nitrosylation</keyword>
<keyword id="KW-0809">Transit peptide</keyword>
<dbReference type="EC" id="5.2.1.8" evidence="1"/>
<dbReference type="EMBL" id="U68544">
    <property type="protein sequence ID" value="AAB08453.1"/>
    <property type="molecule type" value="mRNA"/>
</dbReference>
<dbReference type="EMBL" id="BC086977">
    <property type="protein sequence ID" value="AAH86977.1"/>
    <property type="molecule type" value="mRNA"/>
</dbReference>
<dbReference type="PIR" id="S23122">
    <property type="entry name" value="S23122"/>
</dbReference>
<dbReference type="RefSeq" id="NP_758443.1">
    <property type="nucleotide sequence ID" value="NM_172243.2"/>
</dbReference>
<dbReference type="PDB" id="4TOT">
    <property type="method" value="X-ray"/>
    <property type="resolution" value="2.39 A"/>
    <property type="chains" value="A/B/C/D=43-206"/>
</dbReference>
<dbReference type="PDBsum" id="4TOT"/>
<dbReference type="BMRB" id="P29117"/>
<dbReference type="SMR" id="P29117"/>
<dbReference type="BioGRID" id="251857">
    <property type="interactions" value="2"/>
</dbReference>
<dbReference type="FunCoup" id="P29117">
    <property type="interactions" value="1785"/>
</dbReference>
<dbReference type="IntAct" id="P29117">
    <property type="interactions" value="5"/>
</dbReference>
<dbReference type="MINT" id="P29117"/>
<dbReference type="STRING" id="10116.ENSRNOP00000014382"/>
<dbReference type="iPTMnet" id="P29117"/>
<dbReference type="PhosphoSitePlus" id="P29117"/>
<dbReference type="PaxDb" id="10116-ENSRNOP00000014382"/>
<dbReference type="Ensembl" id="ENSRNOT00000106999.1">
    <property type="protein sequence ID" value="ENSRNOP00000085863.1"/>
    <property type="gene ID" value="ENSRNOG00000010558.8"/>
</dbReference>
<dbReference type="GeneID" id="282819"/>
<dbReference type="KEGG" id="rno:282819"/>
<dbReference type="UCSC" id="RGD:628670">
    <property type="organism name" value="rat"/>
</dbReference>
<dbReference type="AGR" id="RGD:628670"/>
<dbReference type="CTD" id="10105"/>
<dbReference type="RGD" id="628670">
    <property type="gene designation" value="Ppif"/>
</dbReference>
<dbReference type="eggNOG" id="KOG0865">
    <property type="taxonomic scope" value="Eukaryota"/>
</dbReference>
<dbReference type="GeneTree" id="ENSGT00940000156008"/>
<dbReference type="HOGENOM" id="CLU_012062_4_3_1"/>
<dbReference type="InParanoid" id="P29117"/>
<dbReference type="OMA" id="FKSIVPR"/>
<dbReference type="OrthoDB" id="193499at2759"/>
<dbReference type="PhylomeDB" id="P29117"/>
<dbReference type="TreeFam" id="TF312801"/>
<dbReference type="EvolutionaryTrace" id="P29117"/>
<dbReference type="PRO" id="PR:P29117"/>
<dbReference type="Proteomes" id="UP000002494">
    <property type="component" value="Chromosome 16"/>
</dbReference>
<dbReference type="Bgee" id="ENSRNOG00000010558">
    <property type="expression patterns" value="Expressed in heart and 20 other cell types or tissues"/>
</dbReference>
<dbReference type="GO" id="GO:0005737">
    <property type="term" value="C:cytoplasm"/>
    <property type="evidence" value="ECO:0000318"/>
    <property type="project" value="GO_Central"/>
</dbReference>
<dbReference type="GO" id="GO:0005743">
    <property type="term" value="C:mitochondrial inner membrane"/>
    <property type="evidence" value="ECO:0000314"/>
    <property type="project" value="RGD"/>
</dbReference>
<dbReference type="GO" id="GO:0005759">
    <property type="term" value="C:mitochondrial matrix"/>
    <property type="evidence" value="ECO:0000314"/>
    <property type="project" value="FlyBase"/>
</dbReference>
<dbReference type="GO" id="GO:0005757">
    <property type="term" value="C:mitochondrial permeability transition pore complex"/>
    <property type="evidence" value="ECO:0000250"/>
    <property type="project" value="UniProtKB"/>
</dbReference>
<dbReference type="GO" id="GO:0005739">
    <property type="term" value="C:mitochondrion"/>
    <property type="evidence" value="ECO:0000318"/>
    <property type="project" value="GO_Central"/>
</dbReference>
<dbReference type="GO" id="GO:0016018">
    <property type="term" value="F:cyclosporin A binding"/>
    <property type="evidence" value="ECO:0000314"/>
    <property type="project" value="RGD"/>
</dbReference>
<dbReference type="GO" id="GO:0042277">
    <property type="term" value="F:peptide binding"/>
    <property type="evidence" value="ECO:0000314"/>
    <property type="project" value="RGD"/>
</dbReference>
<dbReference type="GO" id="GO:0003755">
    <property type="term" value="F:peptidyl-prolyl cis-trans isomerase activity"/>
    <property type="evidence" value="ECO:0000314"/>
    <property type="project" value="RGD"/>
</dbReference>
<dbReference type="GO" id="GO:0008637">
    <property type="term" value="P:apoptotic mitochondrial changes"/>
    <property type="evidence" value="ECO:0000266"/>
    <property type="project" value="RGD"/>
</dbReference>
<dbReference type="GO" id="GO:0006915">
    <property type="term" value="P:apoptotic process"/>
    <property type="evidence" value="ECO:0000266"/>
    <property type="project" value="RGD"/>
</dbReference>
<dbReference type="GO" id="GO:0071243">
    <property type="term" value="P:cellular response to arsenic-containing substance"/>
    <property type="evidence" value="ECO:0000250"/>
    <property type="project" value="UniProtKB"/>
</dbReference>
<dbReference type="GO" id="GO:0071277">
    <property type="term" value="P:cellular response to calcium ion"/>
    <property type="evidence" value="ECO:0000250"/>
    <property type="project" value="UniProtKB"/>
</dbReference>
<dbReference type="GO" id="GO:0070301">
    <property type="term" value="P:cellular response to hydrogen peroxide"/>
    <property type="evidence" value="ECO:0000250"/>
    <property type="project" value="UniProtKB"/>
</dbReference>
<dbReference type="GO" id="GO:0051882">
    <property type="term" value="P:mitochondrial depolarization"/>
    <property type="evidence" value="ECO:0000266"/>
    <property type="project" value="RGD"/>
</dbReference>
<dbReference type="GO" id="GO:1902686">
    <property type="term" value="P:mitochondrial outer membrane permeabilization involved in programmed cell death"/>
    <property type="evidence" value="ECO:0000250"/>
    <property type="project" value="UniProtKB"/>
</dbReference>
<dbReference type="GO" id="GO:0007005">
    <property type="term" value="P:mitochondrion organization"/>
    <property type="evidence" value="ECO:0000266"/>
    <property type="project" value="RGD"/>
</dbReference>
<dbReference type="GO" id="GO:0061061">
    <property type="term" value="P:muscle structure development"/>
    <property type="evidence" value="ECO:0000266"/>
    <property type="project" value="RGD"/>
</dbReference>
<dbReference type="GO" id="GO:0070266">
    <property type="term" value="P:necroptotic process"/>
    <property type="evidence" value="ECO:0000266"/>
    <property type="project" value="RGD"/>
</dbReference>
<dbReference type="GO" id="GO:0043066">
    <property type="term" value="P:negative regulation of apoptotic process"/>
    <property type="evidence" value="ECO:0000250"/>
    <property type="project" value="UniProtKB"/>
</dbReference>
<dbReference type="GO" id="GO:0032780">
    <property type="term" value="P:negative regulation of ATP-dependent activity"/>
    <property type="evidence" value="ECO:0000250"/>
    <property type="project" value="UniProtKB"/>
</dbReference>
<dbReference type="GO" id="GO:2001243">
    <property type="term" value="P:negative regulation of intrinsic apoptotic signaling pathway"/>
    <property type="evidence" value="ECO:0000250"/>
    <property type="project" value="UniProtKB"/>
</dbReference>
<dbReference type="GO" id="GO:0090324">
    <property type="term" value="P:negative regulation of oxidative phosphorylation"/>
    <property type="evidence" value="ECO:0000250"/>
    <property type="project" value="UniProtKB"/>
</dbReference>
<dbReference type="GO" id="GO:2000276">
    <property type="term" value="P:negative regulation of oxidative phosphorylation uncoupler activity"/>
    <property type="evidence" value="ECO:0000250"/>
    <property type="project" value="UniProtKB"/>
</dbReference>
<dbReference type="GO" id="GO:0090201">
    <property type="term" value="P:negative regulation of release of cytochrome c from mitochondria"/>
    <property type="evidence" value="ECO:0000250"/>
    <property type="project" value="UniProtKB"/>
</dbReference>
<dbReference type="GO" id="GO:0012501">
    <property type="term" value="P:programmed cell death"/>
    <property type="evidence" value="ECO:0000266"/>
    <property type="project" value="RGD"/>
</dbReference>
<dbReference type="GO" id="GO:0006457">
    <property type="term" value="P:protein folding"/>
    <property type="evidence" value="ECO:0000318"/>
    <property type="project" value="GO_Central"/>
</dbReference>
<dbReference type="GO" id="GO:0042981">
    <property type="term" value="P:regulation of apoptotic process"/>
    <property type="evidence" value="ECO:0000314"/>
    <property type="project" value="RGD"/>
</dbReference>
<dbReference type="GO" id="GO:0046902">
    <property type="term" value="P:regulation of mitochondrial membrane permeability"/>
    <property type="evidence" value="ECO:0000314"/>
    <property type="project" value="RGD"/>
</dbReference>
<dbReference type="GO" id="GO:1902445">
    <property type="term" value="P:regulation of mitochondrial membrane permeability involved in programmed necrotic cell death"/>
    <property type="evidence" value="ECO:0000250"/>
    <property type="project" value="UniProtKB"/>
</dbReference>
<dbReference type="GO" id="GO:0010849">
    <property type="term" value="P:regulation of proton-transporting ATPase activity, rotational mechanism"/>
    <property type="evidence" value="ECO:0000250"/>
    <property type="project" value="UniProtKB"/>
</dbReference>
<dbReference type="GO" id="GO:0002931">
    <property type="term" value="P:response to ischemia"/>
    <property type="evidence" value="ECO:0000250"/>
    <property type="project" value="UniProtKB"/>
</dbReference>
<dbReference type="GO" id="GO:0006979">
    <property type="term" value="P:response to oxidative stress"/>
    <property type="evidence" value="ECO:0000266"/>
    <property type="project" value="RGD"/>
</dbReference>
<dbReference type="GO" id="GO:0098528">
    <property type="term" value="P:skeletal muscle fiber differentiation"/>
    <property type="evidence" value="ECO:0000266"/>
    <property type="project" value="RGD"/>
</dbReference>
<dbReference type="CDD" id="cd01926">
    <property type="entry name" value="cyclophilin_ABH_like"/>
    <property type="match status" value="1"/>
</dbReference>
<dbReference type="FunFam" id="2.40.100.10:FF:000002">
    <property type="entry name" value="Peptidyl-prolyl cis-trans isomerase"/>
    <property type="match status" value="1"/>
</dbReference>
<dbReference type="Gene3D" id="2.40.100.10">
    <property type="entry name" value="Cyclophilin-like"/>
    <property type="match status" value="1"/>
</dbReference>
<dbReference type="InterPro" id="IPR029000">
    <property type="entry name" value="Cyclophilin-like_dom_sf"/>
</dbReference>
<dbReference type="InterPro" id="IPR020892">
    <property type="entry name" value="Cyclophilin-type_PPIase_CS"/>
</dbReference>
<dbReference type="InterPro" id="IPR002130">
    <property type="entry name" value="Cyclophilin-type_PPIase_dom"/>
</dbReference>
<dbReference type="PANTHER" id="PTHR11071">
    <property type="entry name" value="PEPTIDYL-PROLYL CIS-TRANS ISOMERASE"/>
    <property type="match status" value="1"/>
</dbReference>
<dbReference type="PANTHER" id="PTHR11071:SF408">
    <property type="entry name" value="PEPTIDYL-PROLYL CIS-TRANS ISOMERASE F, MITOCHONDRIAL"/>
    <property type="match status" value="1"/>
</dbReference>
<dbReference type="Pfam" id="PF00160">
    <property type="entry name" value="Pro_isomerase"/>
    <property type="match status" value="1"/>
</dbReference>
<dbReference type="PRINTS" id="PR00153">
    <property type="entry name" value="CSAPPISMRASE"/>
</dbReference>
<dbReference type="SUPFAM" id="SSF50891">
    <property type="entry name" value="Cyclophilin-like"/>
    <property type="match status" value="1"/>
</dbReference>
<dbReference type="PROSITE" id="PS00170">
    <property type="entry name" value="CSA_PPIASE_1"/>
    <property type="match status" value="1"/>
</dbReference>
<dbReference type="PROSITE" id="PS50072">
    <property type="entry name" value="CSA_PPIASE_2"/>
    <property type="match status" value="1"/>
</dbReference>
<proteinExistence type="evidence at protein level"/>
<gene>
    <name type="primary">Ppif</name>
</gene>
<evidence type="ECO:0000250" key="1">
    <source>
        <dbReference type="UniProtKB" id="P30405"/>
    </source>
</evidence>
<evidence type="ECO:0000250" key="2">
    <source>
        <dbReference type="UniProtKB" id="Q99KR7"/>
    </source>
</evidence>
<evidence type="ECO:0000255" key="3">
    <source>
        <dbReference type="PROSITE-ProRule" id="PRU00156"/>
    </source>
</evidence>
<evidence type="ECO:0000269" key="4">
    <source>
    </source>
</evidence>
<evidence type="ECO:0000269" key="5">
    <source>
    </source>
</evidence>
<evidence type="ECO:0000269" key="6">
    <source>
    </source>
</evidence>
<evidence type="ECO:0000269" key="7">
    <source>
    </source>
</evidence>
<evidence type="ECO:0000269" key="8">
    <source>
    </source>
</evidence>
<evidence type="ECO:0000269" key="9">
    <source>
    </source>
</evidence>
<evidence type="ECO:0000269" key="10">
    <source>
    </source>
</evidence>
<evidence type="ECO:0000305" key="11"/>
<evidence type="ECO:0000305" key="12">
    <source>
    </source>
</evidence>
<evidence type="ECO:0007829" key="13">
    <source>
        <dbReference type="PDB" id="4TOT"/>
    </source>
</evidence>
<organism>
    <name type="scientific">Rattus norvegicus</name>
    <name type="common">Rat</name>
    <dbReference type="NCBI Taxonomy" id="10116"/>
    <lineage>
        <taxon>Eukaryota</taxon>
        <taxon>Metazoa</taxon>
        <taxon>Chordata</taxon>
        <taxon>Craniata</taxon>
        <taxon>Vertebrata</taxon>
        <taxon>Euteleostomi</taxon>
        <taxon>Mammalia</taxon>
        <taxon>Eutheria</taxon>
        <taxon>Euarchontoglires</taxon>
        <taxon>Glires</taxon>
        <taxon>Rodentia</taxon>
        <taxon>Myomorpha</taxon>
        <taxon>Muroidea</taxon>
        <taxon>Muridae</taxon>
        <taxon>Murinae</taxon>
        <taxon>Rattus</taxon>
    </lineage>
</organism>
<comment type="function">
    <text evidence="1 6 7 8 9">PPIase that catalyzes the cis-trans isomerization of proline imidic peptide bonds in oligopeptides and may therefore assist protein folding (By similarity). Involved in regulation of the mitochondrial permeability transition pore (mPTP) (PubMed:8567677, PubMed:9309684, PubMed:9820802). It is proposed that its association with the mPTP is masking a binding site for inhibiting inorganic phosphate (Pi) and promotes the open probability of the mPTP leading to apoptosis or necrosis; the requirement of the PPIase activity for this function is debated (PubMed:8567677, PubMed:9309684, PubMed:9820802). In cooperation with mitochondrial p53/TP53 is involved in activating oxidative stress-induced necrosis (PubMed:8567677, PubMed:9309684, PubMed:9820802). Involved in modulation of mitochondrial membrane F(1)F(0) ATP synthase activity and regulation of mitochondrial matrix adenine nucleotide levels (PubMed:8567677, PubMed:9309684, PubMed:9820802). Has anti-apoptotic activity independently of mPTP and in cooperation with BCL2 inhibits cytochrome c-dependent apoptosis (PubMed:19228691).</text>
</comment>
<comment type="catalytic activity">
    <reaction evidence="1">
        <text>[protein]-peptidylproline (omega=180) = [protein]-peptidylproline (omega=0)</text>
        <dbReference type="Rhea" id="RHEA:16237"/>
        <dbReference type="Rhea" id="RHEA-COMP:10747"/>
        <dbReference type="Rhea" id="RHEA-COMP:10748"/>
        <dbReference type="ChEBI" id="CHEBI:83833"/>
        <dbReference type="ChEBI" id="CHEBI:83834"/>
        <dbReference type="EC" id="5.2.1.8"/>
    </reaction>
</comment>
<comment type="activity regulation">
    <text evidence="1">Binds cyclosporin A (CsA). Is displaced by CsA from the mPTP leading to a lower open probability of the mPTP.</text>
</comment>
<comment type="subunit">
    <text evidence="1 2 5 6 10">Associates with the mitochondrial membrane ATP synthase F(1)F(0) ATP synthase; the association is increased by inorganic phosphate (Pi) and decreased by cyclosporin A (CsA) (By similarity). Interacts with ATP5F1B; ATP5PD and ATP5PO (By similarity). Interacts with SLC25A3; the interaction is impaired by CsA (PubMed:18667415). Interacts with BCL2; the interaction is impaired by CsA (PubMed:19228691). Interacts with TP53; the association implicates preferentially tetrameric TP53, is induced by oxidative stress and is impaired by CsA (By similarity). Interacts with C1QBP (By similarity). Interacts with MCUR1 (By similarity). Component of the mitochondrial permeability transition pore complex (mPTPC), at least composed of SPG7, VDAC1 and PPIF (PubMed:9874241). Interacts with SPG7 (By similarity).</text>
</comment>
<comment type="subcellular location">
    <subcellularLocation>
        <location evidence="6 7">Mitochondrion matrix</location>
    </subcellularLocation>
</comment>
<comment type="PTM">
    <text evidence="2">Acetylated at Lys-166; deacetylated at Lys-166 by SIRT3.</text>
</comment>
<comment type="similarity">
    <text evidence="11">Belongs to the cyclophilin-type PPIase family.</text>
</comment>
<comment type="caution">
    <text evidence="12">The polyclonal antibody used in PubMed:9820802 and PubMed:9874241 and initially thought to detect SLC25A4/ANT1 in interactions with Ppif/CyP-D is rather detecting SLC25A3.</text>
</comment>
<feature type="transit peptide" description="Mitochondrion" evidence="4">
    <location>
        <begin position="1"/>
        <end position="29"/>
    </location>
</feature>
<feature type="chain" id="PRO_0000025491" description="Peptidyl-prolyl cis-trans isomerase F, mitochondrial">
    <location>
        <begin position="30"/>
        <end position="206"/>
    </location>
</feature>
<feature type="domain" description="PPIase cyclophilin-type" evidence="3">
    <location>
        <begin position="48"/>
        <end position="204"/>
    </location>
</feature>
<feature type="modified residue" description="N6-acetyllysine; alternate" evidence="2">
    <location>
        <position position="66"/>
    </location>
</feature>
<feature type="modified residue" description="N6-succinyllysine; alternate" evidence="2">
    <location>
        <position position="66"/>
    </location>
</feature>
<feature type="modified residue" description="N6-succinyllysine" evidence="2">
    <location>
        <position position="85"/>
    </location>
</feature>
<feature type="modified residue" description="N6-acetyllysine" evidence="2">
    <location>
        <position position="166"/>
    </location>
</feature>
<feature type="modified residue" description="N6-succinyllysine" evidence="2">
    <location>
        <position position="174"/>
    </location>
</feature>
<feature type="modified residue" description="N6-succinyllysine" evidence="2">
    <location>
        <position position="189"/>
    </location>
</feature>
<feature type="modified residue" description="S-nitrosocysteine" evidence="2">
    <location>
        <position position="202"/>
    </location>
</feature>
<feature type="sequence variant" description="In a minor form.">
    <location>
        <begin position="30"/>
        <end position="39"/>
    </location>
</feature>
<feature type="sequence variant">
    <original>S</original>
    <variation>R</variation>
    <location>
        <position position="31"/>
    </location>
</feature>
<feature type="sequence conflict" description="In Ref. 3; AA sequence." evidence="11" ref="3">
    <original>C</original>
    <variation>A</variation>
    <location>
        <position position="30"/>
    </location>
</feature>
<feature type="strand" evidence="13">
    <location>
        <begin position="46"/>
        <end position="53"/>
    </location>
</feature>
<feature type="strand" evidence="13">
    <location>
        <begin position="56"/>
        <end position="65"/>
    </location>
</feature>
<feature type="turn" evidence="13">
    <location>
        <begin position="67"/>
        <end position="69"/>
    </location>
</feature>
<feature type="helix" evidence="13">
    <location>
        <begin position="71"/>
        <end position="82"/>
    </location>
</feature>
<feature type="turn" evidence="13">
    <location>
        <begin position="83"/>
        <end position="85"/>
    </location>
</feature>
<feature type="strand" evidence="13">
    <location>
        <begin position="96"/>
        <end position="98"/>
    </location>
</feature>
<feature type="turn" evidence="13">
    <location>
        <begin position="99"/>
        <end position="101"/>
    </location>
</feature>
<feature type="strand" evidence="13">
    <location>
        <begin position="102"/>
        <end position="105"/>
    </location>
</feature>
<feature type="strand" evidence="13">
    <location>
        <begin position="109"/>
        <end position="114"/>
    </location>
</feature>
<feature type="strand" evidence="13">
    <location>
        <begin position="119"/>
        <end position="122"/>
    </location>
</feature>
<feature type="strand" evidence="13">
    <location>
        <begin position="138"/>
        <end position="141"/>
    </location>
</feature>
<feature type="strand" evidence="13">
    <location>
        <begin position="143"/>
        <end position="145"/>
    </location>
</feature>
<feature type="strand" evidence="13">
    <location>
        <begin position="153"/>
        <end position="158"/>
    </location>
</feature>
<feature type="helix" evidence="13">
    <location>
        <begin position="161"/>
        <end position="163"/>
    </location>
</feature>
<feature type="turn" evidence="13">
    <location>
        <begin position="164"/>
        <end position="166"/>
    </location>
</feature>
<feature type="strand" evidence="13">
    <location>
        <begin position="169"/>
        <end position="175"/>
    </location>
</feature>
<feature type="helix" evidence="13">
    <location>
        <begin position="177"/>
        <end position="185"/>
    </location>
</feature>
<feature type="strand" evidence="13">
    <location>
        <begin position="197"/>
        <end position="206"/>
    </location>
</feature>